<feature type="chain" id="PRO_0000169446" description="Inner membrane protein YhaI">
    <location>
        <begin position="1"/>
        <end position="118"/>
    </location>
</feature>
<feature type="topological domain" description="Periplasmic" evidence="2">
    <location>
        <begin position="1"/>
        <end position="25"/>
    </location>
</feature>
<feature type="transmembrane region" description="Helical" evidence="2">
    <location>
        <begin position="26"/>
        <end position="46"/>
    </location>
</feature>
<feature type="topological domain" description="Cytoplasmic" evidence="2">
    <location>
        <position position="47"/>
    </location>
</feature>
<feature type="transmembrane region" description="Helical" evidence="2">
    <location>
        <begin position="48"/>
        <end position="68"/>
    </location>
</feature>
<feature type="topological domain" description="Periplasmic" evidence="2">
    <location>
        <begin position="69"/>
        <end position="77"/>
    </location>
</feature>
<feature type="transmembrane region" description="Helical" evidence="2">
    <location>
        <begin position="78"/>
        <end position="98"/>
    </location>
</feature>
<feature type="topological domain" description="Cytoplasmic" evidence="2">
    <location>
        <begin position="99"/>
        <end position="118"/>
    </location>
</feature>
<gene>
    <name type="primary">yhaI</name>
    <name type="ordered locus">Z4458</name>
    <name type="ordered locus">ECs3986</name>
</gene>
<evidence type="ECO:0000250" key="1"/>
<evidence type="ECO:0000255" key="2"/>
<evidence type="ECO:0000305" key="3"/>
<protein>
    <recommendedName>
        <fullName>Inner membrane protein YhaI</fullName>
    </recommendedName>
</protein>
<proteinExistence type="inferred from homology"/>
<accession>P64593</accession>
<accession>P42622</accession>
<dbReference type="EMBL" id="AE005174">
    <property type="protein sequence ID" value="AAG58237.1"/>
    <property type="molecule type" value="Genomic_DNA"/>
</dbReference>
<dbReference type="EMBL" id="BA000007">
    <property type="protein sequence ID" value="BAB37409.1"/>
    <property type="molecule type" value="Genomic_DNA"/>
</dbReference>
<dbReference type="PIR" id="A85972">
    <property type="entry name" value="A85972"/>
</dbReference>
<dbReference type="PIR" id="B91127">
    <property type="entry name" value="B91127"/>
</dbReference>
<dbReference type="RefSeq" id="NP_312013.1">
    <property type="nucleotide sequence ID" value="NC_002695.1"/>
</dbReference>
<dbReference type="RefSeq" id="WP_001198807.1">
    <property type="nucleotide sequence ID" value="NZ_VOAI01000009.1"/>
</dbReference>
<dbReference type="STRING" id="155864.Z4458"/>
<dbReference type="GeneID" id="916183"/>
<dbReference type="KEGG" id="ece:Z4458"/>
<dbReference type="KEGG" id="ecs:ECs_3986"/>
<dbReference type="PATRIC" id="fig|386585.9.peg.4160"/>
<dbReference type="eggNOG" id="COG3152">
    <property type="taxonomic scope" value="Bacteria"/>
</dbReference>
<dbReference type="HOGENOM" id="CLU_093674_4_1_6"/>
<dbReference type="OMA" id="WQLIGLI"/>
<dbReference type="Proteomes" id="UP000000558">
    <property type="component" value="Chromosome"/>
</dbReference>
<dbReference type="Proteomes" id="UP000002519">
    <property type="component" value="Chromosome"/>
</dbReference>
<dbReference type="GO" id="GO:0005886">
    <property type="term" value="C:plasma membrane"/>
    <property type="evidence" value="ECO:0007669"/>
    <property type="project" value="UniProtKB-SubCell"/>
</dbReference>
<dbReference type="InterPro" id="IPR008523">
    <property type="entry name" value="DUF805"/>
</dbReference>
<dbReference type="PANTHER" id="PTHR34980:SF2">
    <property type="entry name" value="INNER MEMBRANE PROTEIN YHAH-RELATED"/>
    <property type="match status" value="1"/>
</dbReference>
<dbReference type="PANTHER" id="PTHR34980">
    <property type="entry name" value="INNER MEMBRANE PROTEIN-RELATED-RELATED"/>
    <property type="match status" value="1"/>
</dbReference>
<dbReference type="Pfam" id="PF05656">
    <property type="entry name" value="DUF805"/>
    <property type="match status" value="1"/>
</dbReference>
<name>YHAI_ECO57</name>
<keyword id="KW-0997">Cell inner membrane</keyword>
<keyword id="KW-1003">Cell membrane</keyword>
<keyword id="KW-0472">Membrane</keyword>
<keyword id="KW-1185">Reference proteome</keyword>
<keyword id="KW-0812">Transmembrane</keyword>
<keyword id="KW-1133">Transmembrane helix</keyword>
<reference key="1">
    <citation type="journal article" date="2001" name="Nature">
        <title>Genome sequence of enterohaemorrhagic Escherichia coli O157:H7.</title>
        <authorList>
            <person name="Perna N.T."/>
            <person name="Plunkett G. III"/>
            <person name="Burland V."/>
            <person name="Mau B."/>
            <person name="Glasner J.D."/>
            <person name="Rose D.J."/>
            <person name="Mayhew G.F."/>
            <person name="Evans P.S."/>
            <person name="Gregor J."/>
            <person name="Kirkpatrick H.A."/>
            <person name="Posfai G."/>
            <person name="Hackett J."/>
            <person name="Klink S."/>
            <person name="Boutin A."/>
            <person name="Shao Y."/>
            <person name="Miller L."/>
            <person name="Grotbeck E.J."/>
            <person name="Davis N.W."/>
            <person name="Lim A."/>
            <person name="Dimalanta E.T."/>
            <person name="Potamousis K."/>
            <person name="Apodaca J."/>
            <person name="Anantharaman T.S."/>
            <person name="Lin J."/>
            <person name="Yen G."/>
            <person name="Schwartz D.C."/>
            <person name="Welch R.A."/>
            <person name="Blattner F.R."/>
        </authorList>
    </citation>
    <scope>NUCLEOTIDE SEQUENCE [LARGE SCALE GENOMIC DNA]</scope>
    <source>
        <strain>O157:H7 / EDL933 / ATCC 700927 / EHEC</strain>
    </source>
</reference>
<reference key="2">
    <citation type="journal article" date="2001" name="DNA Res.">
        <title>Complete genome sequence of enterohemorrhagic Escherichia coli O157:H7 and genomic comparison with a laboratory strain K-12.</title>
        <authorList>
            <person name="Hayashi T."/>
            <person name="Makino K."/>
            <person name="Ohnishi M."/>
            <person name="Kurokawa K."/>
            <person name="Ishii K."/>
            <person name="Yokoyama K."/>
            <person name="Han C.-G."/>
            <person name="Ohtsubo E."/>
            <person name="Nakayama K."/>
            <person name="Murata T."/>
            <person name="Tanaka M."/>
            <person name="Tobe T."/>
            <person name="Iida T."/>
            <person name="Takami H."/>
            <person name="Honda T."/>
            <person name="Sasakawa C."/>
            <person name="Ogasawara N."/>
            <person name="Yasunaga T."/>
            <person name="Kuhara S."/>
            <person name="Shiba T."/>
            <person name="Hattori M."/>
            <person name="Shinagawa H."/>
        </authorList>
    </citation>
    <scope>NUCLEOTIDE SEQUENCE [LARGE SCALE GENOMIC DNA]</scope>
    <source>
        <strain>O157:H7 / Sakai / RIMD 0509952 / EHEC</strain>
    </source>
</reference>
<organism>
    <name type="scientific">Escherichia coli O157:H7</name>
    <dbReference type="NCBI Taxonomy" id="83334"/>
    <lineage>
        <taxon>Bacteria</taxon>
        <taxon>Pseudomonadati</taxon>
        <taxon>Pseudomonadota</taxon>
        <taxon>Gammaproteobacteria</taxon>
        <taxon>Enterobacterales</taxon>
        <taxon>Enterobacteriaceae</taxon>
        <taxon>Escherichia</taxon>
    </lineage>
</organism>
<comment type="subcellular location">
    <subcellularLocation>
        <location evidence="1">Cell inner membrane</location>
        <topology evidence="1">Multi-pass membrane protein</topology>
    </subcellularLocation>
</comment>
<comment type="similarity">
    <text evidence="3">To E.coli YhaH.</text>
</comment>
<sequence>MQWYLSVLKNYVGFSGRARRKEYWMFTLINAIVGAIINVIQLILGLELPYLSMLYLLATFLPVLALAIRRLHDTDRSGAWALLFFVPFIGWLVLLVFFCTEGTSGSNRYGNDPKFGSN</sequence>